<name>GRIK2_MACFA</name>
<proteinExistence type="evidence at transcript level"/>
<organism>
    <name type="scientific">Macaca fascicularis</name>
    <name type="common">Crab-eating macaque</name>
    <name type="synonym">Cynomolgus monkey</name>
    <dbReference type="NCBI Taxonomy" id="9541"/>
    <lineage>
        <taxon>Eukaryota</taxon>
        <taxon>Metazoa</taxon>
        <taxon>Chordata</taxon>
        <taxon>Craniata</taxon>
        <taxon>Vertebrata</taxon>
        <taxon>Euteleostomi</taxon>
        <taxon>Mammalia</taxon>
        <taxon>Eutheria</taxon>
        <taxon>Euarchontoglires</taxon>
        <taxon>Primates</taxon>
        <taxon>Haplorrhini</taxon>
        <taxon>Catarrhini</taxon>
        <taxon>Cercopithecidae</taxon>
        <taxon>Cercopithecinae</taxon>
        <taxon>Macaca</taxon>
    </lineage>
</organism>
<reference key="1">
    <citation type="journal article" date="2006" name="Mol. Vis.">
        <title>Expression and sequences of genes encoding glutamate receptors and transporters in primate retina determined using 3'-end amplification polymerase chain reaction.</title>
        <authorList>
            <person name="Hanna M.C."/>
            <person name="Calkins D.J."/>
        </authorList>
    </citation>
    <scope>NUCLEOTIDE SEQUENCE [MRNA]</scope>
    <source>
        <tissue>Retina</tissue>
    </source>
</reference>
<evidence type="ECO:0000250" key="1">
    <source>
        <dbReference type="UniProtKB" id="P39087"/>
    </source>
</evidence>
<evidence type="ECO:0000250" key="2">
    <source>
        <dbReference type="UniProtKB" id="P42260"/>
    </source>
</evidence>
<evidence type="ECO:0000250" key="3">
    <source>
        <dbReference type="UniProtKB" id="Q13002"/>
    </source>
</evidence>
<evidence type="ECO:0000255" key="4"/>
<evidence type="ECO:0000305" key="5"/>
<keyword id="KW-1003">Cell membrane</keyword>
<keyword id="KW-1015">Disulfide bond</keyword>
<keyword id="KW-0325">Glycoprotein</keyword>
<keyword id="KW-0407">Ion channel</keyword>
<keyword id="KW-0406">Ion transport</keyword>
<keyword id="KW-1017">Isopeptide bond</keyword>
<keyword id="KW-1071">Ligand-gated ion channel</keyword>
<keyword id="KW-0472">Membrane</keyword>
<keyword id="KW-0597">Phosphoprotein</keyword>
<keyword id="KW-0628">Postsynaptic cell membrane</keyword>
<keyword id="KW-0675">Receptor</keyword>
<keyword id="KW-1185">Reference proteome</keyword>
<keyword id="KW-0732">Signal</keyword>
<keyword id="KW-0770">Synapse</keyword>
<keyword id="KW-0812">Transmembrane</keyword>
<keyword id="KW-1133">Transmembrane helix</keyword>
<keyword id="KW-0813">Transport</keyword>
<keyword id="KW-0832">Ubl conjugation</keyword>
<comment type="function">
    <text evidence="1 3">Ionotropic glutamate receptor that functions as a cation-permeable ligand-gated ion channel, gated by L-glutamate and the glutamatergic agonist kainic acid. L-glutamate acts as an excitatory neurotransmitter at many synapses in the central nervous system. Binding of the excitatory neurotransmitter L-glutamate induces a conformation change, leading to the opening of the cation channel, and thereby converts the chemical signal to an electrical impulse. The receptor then desensitizes rapidly and enters a transient inactive state, characterized by the presence of bound agonist. Modulates cell surface expression of NETO2. In association with GRIK3, involved in presynaptic facilitation of glutamate release at hippocampal mossy fiber synapses.</text>
</comment>
<comment type="function">
    <text evidence="1">Independent of its ionotropic glutamate receptor activity, acts as a thermoreceptor conferring sensitivity to cold temperatures (By similarity). Functions in dorsal root ganglion neurons (By similarity).</text>
</comment>
<comment type="catalytic activity">
    <reaction evidence="3">
        <text>Ca(2+)(in) = Ca(2+)(out)</text>
        <dbReference type="Rhea" id="RHEA:29671"/>
        <dbReference type="ChEBI" id="CHEBI:29108"/>
    </reaction>
</comment>
<comment type="catalytic activity">
    <reaction evidence="3">
        <text>Na(+)(in) = Na(+)(out)</text>
        <dbReference type="Rhea" id="RHEA:34963"/>
        <dbReference type="ChEBI" id="CHEBI:29101"/>
    </reaction>
</comment>
<comment type="activity regulation">
    <text evidence="1">Cold receptor activity activated by temperatures between 10-19 degrees Celsius.</text>
</comment>
<comment type="subunit">
    <text evidence="1 2 3">Homotetramer and heterotetramer with GRIK5. Tetramers may be formed by the dimerization of dimers. Assembles into a kainate-gated homomeric channel that does not bind AMPA. Can form functional heteromeric receptors with GRIK3, GRIK4 and GRIK5. Interacts with NETO2. Interacts with DLG4. Interacts with NETO2. Interacts (via C-terminus) with KLHL17 (via kelch repeats); the interaction targets GRIK2 for degradation via ubiquitin-proteasome pathway.</text>
</comment>
<comment type="subcellular location">
    <subcellularLocation>
        <location evidence="2">Cell membrane</location>
        <topology evidence="4">Multi-pass membrane protein</topology>
    </subcellularLocation>
    <subcellularLocation>
        <location evidence="2">Postsynaptic cell membrane</location>
        <topology evidence="4">Multi-pass membrane protein</topology>
    </subcellularLocation>
</comment>
<comment type="PTM">
    <text evidence="2">Sumoylation mediates kainate receptor-mediated endocytosis and regulates synaptic transmission. Sumoylation is enhanced by PIAS3 and desumoylated by SENP1 (By similarity).</text>
</comment>
<comment type="PTM">
    <text evidence="2">Ubiquitinated. Ubiquitination regulates the GRIK2 levels at the synapse by leading kainate receptor degradation through proteasome (By similarity).</text>
</comment>
<comment type="PTM">
    <text evidence="3">Phosphorylated by PKC at Ser-868 upon agonist activation, this directly enhance sumoylation.</text>
</comment>
<comment type="miscellaneous">
    <text evidence="3">The postsynaptic actions of Glu are mediated by a variety of receptors that are named according to their selective agonists. This receptor binds domoate &gt; kainate &gt; quisqualate &gt; 6-cyano-7-nitroquinoxaline-2,3-dione &gt; L-glutamate = 6,7-dinitroquinoxaline-2,3-dione &gt; dihydrokainate (By similarity).</text>
</comment>
<comment type="similarity">
    <text evidence="5">Belongs to the glutamate-gated ion channel (TC 1.A.10.1) family. GRIK2 subfamily.</text>
</comment>
<protein>
    <recommendedName>
        <fullName>Glutamate receptor ionotropic, kainate 2</fullName>
        <shortName>GluK2</shortName>
    </recommendedName>
    <alternativeName>
        <fullName>Glutamate receptor 6</fullName>
        <shortName>GluR-6</shortName>
        <shortName>GluR6</shortName>
    </alternativeName>
</protein>
<sequence length="908" mass="102537">MKIIFPILSNPVFRRTVKLLLCLLWIGYSQGTTHVLRFGGIFEYVESGPMGAEELAFRFAVNTINRNRTLLPNTTLTYDTQKINLYDSFEASKKACDQLSLGVAAIFGPSHSSSANAVQSICNALGVPHIQTRWKHQVSDNKDSFYVSLYPDFSSLSRAILDLVQFFKWKTVTVVYDDSTGLIRLQELIKAPSRYNLRLKIRQLPADTKDAKPLLKEMKRGKEFHVIFDCSHEMAAGILKQALAMGMMTEYYHYIFTTLDLFALDVEPYRYSGVNMTGFRILNTENTQVSSIIEKWSMERLQAPPKPDSGLLDGFMTTDAALMYDAVHVVSVAVQQFPQMTVSSLQCNRHKPWRFGTRFMSLIKEAHWEGLTGRITFNKTNGLRTDFDLDVISLKEEGLEKIGTWDPASGLNMTESQKGKPANITDSLSNRSLIVTTILEEPYVLFKKSDKPLYGNDRFEGYCIDLLRELSTILGFTYEIRLVEDGKYGAQDDANGQWNGMVRELIDHKADLAVAPLAITYVREKVIDFSKPFMTLGISILYRKPNGTNPGVFSFLNPLSPDIWMYVLLACLGVSCVLFVIARFSPYEWYNPHPCNPDSDVVENNFTLLNSFWFGVGALMRQGSELMPKALSTRIVGGIWWFFTLIIISSYTANLAAFLTVERMESPIDSADDLAKQTKIEYGAVEDGATMTFFKKSKISTYDKMWAFMSSRRQSVLVKSNEEGIQRVLTSDYAFLMESTTIEFVTQRNCNLTQIGGLIDSKGYGVGTPMGSPYRDKITIAILQLQEEGKLHMMKEKWWRGNGCPEEESKEASALGVQNIGGIFIVLAAGLVLSVFVAVGEFLYKSKKNAQLEKRSFCSAMVEELRMSLKCQRRLKHKPQAPVIVKTEEVINMHTFNDRRLPGKETMA</sequence>
<gene>
    <name type="primary">GRIK2</name>
</gene>
<feature type="signal peptide" evidence="4">
    <location>
        <begin position="1"/>
        <end position="31"/>
    </location>
</feature>
<feature type="chain" id="PRO_0000271758" description="Glutamate receptor ionotropic, kainate 2">
    <location>
        <begin position="32"/>
        <end position="908"/>
    </location>
</feature>
<feature type="topological domain" description="Extracellular" evidence="2">
    <location>
        <begin position="32"/>
        <end position="561"/>
    </location>
</feature>
<feature type="transmembrane region" description="Helical" evidence="4">
    <location>
        <begin position="562"/>
        <end position="582"/>
    </location>
</feature>
<feature type="topological domain" description="Cytoplasmic" evidence="2">
    <location>
        <begin position="583"/>
        <end position="638"/>
    </location>
</feature>
<feature type="transmembrane region" description="Helical" evidence="4">
    <location>
        <begin position="639"/>
        <end position="659"/>
    </location>
</feature>
<feature type="topological domain" description="Extracellular" evidence="2">
    <location>
        <begin position="660"/>
        <end position="819"/>
    </location>
</feature>
<feature type="transmembrane region" description="Helical" evidence="4">
    <location>
        <begin position="820"/>
        <end position="840"/>
    </location>
</feature>
<feature type="topological domain" description="Cytoplasmic" evidence="2">
    <location>
        <begin position="841"/>
        <end position="908"/>
    </location>
</feature>
<feature type="binding site" evidence="2">
    <location>
        <position position="516"/>
    </location>
    <ligand>
        <name>L-glutamate</name>
        <dbReference type="ChEBI" id="CHEBI:29985"/>
    </ligand>
</feature>
<feature type="binding site" evidence="2">
    <location>
        <position position="518"/>
    </location>
    <ligand>
        <name>L-glutamate</name>
        <dbReference type="ChEBI" id="CHEBI:29985"/>
    </ligand>
</feature>
<feature type="binding site" evidence="2">
    <location>
        <position position="523"/>
    </location>
    <ligand>
        <name>L-glutamate</name>
        <dbReference type="ChEBI" id="CHEBI:29985"/>
    </ligand>
</feature>
<feature type="binding site" evidence="2">
    <location>
        <position position="689"/>
    </location>
    <ligand>
        <name>L-glutamate</name>
        <dbReference type="ChEBI" id="CHEBI:29985"/>
    </ligand>
</feature>
<feature type="binding site" evidence="2">
    <location>
        <position position="690"/>
    </location>
    <ligand>
        <name>L-glutamate</name>
        <dbReference type="ChEBI" id="CHEBI:29985"/>
    </ligand>
</feature>
<feature type="binding site" evidence="2">
    <location>
        <position position="738"/>
    </location>
    <ligand>
        <name>L-glutamate</name>
        <dbReference type="ChEBI" id="CHEBI:29985"/>
    </ligand>
</feature>
<feature type="modified residue" description="Phosphoserine; by PKC" evidence="3">
    <location>
        <position position="846"/>
    </location>
</feature>
<feature type="modified residue" description="Phosphoserine; by PKC" evidence="3">
    <location>
        <position position="868"/>
    </location>
</feature>
<feature type="glycosylation site" description="N-linked (GlcNAc...) asparagine" evidence="4">
    <location>
        <position position="67"/>
    </location>
</feature>
<feature type="glycosylation site" description="N-linked (GlcNAc...) asparagine" evidence="4">
    <location>
        <position position="73"/>
    </location>
</feature>
<feature type="glycosylation site" description="N-linked (GlcNAc...) asparagine" evidence="4">
    <location>
        <position position="275"/>
    </location>
</feature>
<feature type="glycosylation site" description="N-linked (GlcNAc...) asparagine" evidence="4">
    <location>
        <position position="378"/>
    </location>
</feature>
<feature type="glycosylation site" description="N-linked (GlcNAc...) asparagine" evidence="4">
    <location>
        <position position="412"/>
    </location>
</feature>
<feature type="glycosylation site" description="N-linked (GlcNAc...) asparagine" evidence="4">
    <location>
        <position position="423"/>
    </location>
</feature>
<feature type="glycosylation site" description="N-linked (GlcNAc...) asparagine" evidence="4">
    <location>
        <position position="430"/>
    </location>
</feature>
<feature type="glycosylation site" description="N-linked (GlcNAc...) asparagine" evidence="4">
    <location>
        <position position="546"/>
    </location>
</feature>
<feature type="glycosylation site" description="N-linked (GlcNAc...) asparagine" evidence="4">
    <location>
        <position position="751"/>
    </location>
</feature>
<feature type="disulfide bond" evidence="2">
    <location>
        <begin position="96"/>
        <end position="347"/>
    </location>
</feature>
<feature type="disulfide bond" evidence="3">
    <location>
        <begin position="750"/>
        <end position="804"/>
    </location>
</feature>
<feature type="cross-link" description="Glycyl lysine isopeptide (Lys-Gly) (interchain with G-Cter in SUMO1)" evidence="3">
    <location>
        <position position="886"/>
    </location>
</feature>
<accession>Q38PU3</accession>
<dbReference type="EMBL" id="DQ159934">
    <property type="protein sequence ID" value="ABA47258.1"/>
    <property type="molecule type" value="mRNA"/>
</dbReference>
<dbReference type="SMR" id="Q38PU3"/>
<dbReference type="STRING" id="9541.ENSMFAP00000045067"/>
<dbReference type="GlyCosmos" id="Q38PU3">
    <property type="glycosylation" value="9 sites, No reported glycans"/>
</dbReference>
<dbReference type="eggNOG" id="KOG1052">
    <property type="taxonomic scope" value="Eukaryota"/>
</dbReference>
<dbReference type="Proteomes" id="UP000233100">
    <property type="component" value="Unplaced"/>
</dbReference>
<dbReference type="GO" id="GO:0030424">
    <property type="term" value="C:axon"/>
    <property type="evidence" value="ECO:0000314"/>
    <property type="project" value="UniProtKB"/>
</dbReference>
<dbReference type="GO" id="GO:0043197">
    <property type="term" value="C:dendritic spine"/>
    <property type="evidence" value="ECO:0000314"/>
    <property type="project" value="UniProtKB"/>
</dbReference>
<dbReference type="GO" id="GO:0005886">
    <property type="term" value="C:plasma membrane"/>
    <property type="evidence" value="ECO:0000250"/>
    <property type="project" value="UniProtKB"/>
</dbReference>
<dbReference type="GO" id="GO:0045211">
    <property type="term" value="C:postsynaptic membrane"/>
    <property type="evidence" value="ECO:0007669"/>
    <property type="project" value="UniProtKB-SubCell"/>
</dbReference>
<dbReference type="GO" id="GO:0005234">
    <property type="term" value="F:extracellularly glutamate-gated ion channel activity"/>
    <property type="evidence" value="ECO:0000250"/>
    <property type="project" value="UniProtKB"/>
</dbReference>
<dbReference type="GO" id="GO:0022849">
    <property type="term" value="F:glutamate-gated calcium ion channel activity"/>
    <property type="evidence" value="ECO:0000250"/>
    <property type="project" value="UniProtKB"/>
</dbReference>
<dbReference type="GO" id="GO:0004970">
    <property type="term" value="F:glutamate-gated receptor activity"/>
    <property type="evidence" value="ECO:0000250"/>
    <property type="project" value="UniProtKB"/>
</dbReference>
<dbReference type="GO" id="GO:0015277">
    <property type="term" value="F:kainate selective glutamate receptor activity"/>
    <property type="evidence" value="ECO:0000250"/>
    <property type="project" value="UniProtKB"/>
</dbReference>
<dbReference type="GO" id="GO:0120169">
    <property type="term" value="P:detection of cold stimulus involved in thermoception"/>
    <property type="evidence" value="ECO:0000250"/>
    <property type="project" value="UniProtKB"/>
</dbReference>
<dbReference type="CDD" id="cd06382">
    <property type="entry name" value="PBP1_iGluR_Kainate"/>
    <property type="match status" value="1"/>
</dbReference>
<dbReference type="FunFam" id="3.40.50.2300:FF:000010">
    <property type="entry name" value="Glutamate ionotropic receptor kainate type subunit 1"/>
    <property type="match status" value="1"/>
</dbReference>
<dbReference type="FunFam" id="3.40.190.10:FF:000210">
    <property type="entry name" value="Glutamate receptor ionotropic, kainate 1"/>
    <property type="match status" value="1"/>
</dbReference>
<dbReference type="FunFam" id="3.40.190.10:FF:000240">
    <property type="entry name" value="Glutamate receptor ionotropic, kainate 2"/>
    <property type="match status" value="1"/>
</dbReference>
<dbReference type="FunFam" id="1.10.287.70:FF:000010">
    <property type="entry name" value="Putative glutamate receptor ionotropic kainate 1"/>
    <property type="match status" value="1"/>
</dbReference>
<dbReference type="Gene3D" id="1.10.287.70">
    <property type="match status" value="1"/>
</dbReference>
<dbReference type="Gene3D" id="3.40.50.2300">
    <property type="match status" value="2"/>
</dbReference>
<dbReference type="Gene3D" id="3.40.190.10">
    <property type="entry name" value="Periplasmic binding protein-like II"/>
    <property type="match status" value="1"/>
</dbReference>
<dbReference type="InterPro" id="IPR001828">
    <property type="entry name" value="ANF_lig-bd_rcpt"/>
</dbReference>
<dbReference type="InterPro" id="IPR019594">
    <property type="entry name" value="Glu/Gly-bd"/>
</dbReference>
<dbReference type="InterPro" id="IPR001508">
    <property type="entry name" value="Iono_Glu_rcpt_met"/>
</dbReference>
<dbReference type="InterPro" id="IPR015683">
    <property type="entry name" value="Ionotropic_Glu_rcpt"/>
</dbReference>
<dbReference type="InterPro" id="IPR001320">
    <property type="entry name" value="Iontro_rcpt_C"/>
</dbReference>
<dbReference type="InterPro" id="IPR028082">
    <property type="entry name" value="Peripla_BP_I"/>
</dbReference>
<dbReference type="PANTHER" id="PTHR18966">
    <property type="entry name" value="IONOTROPIC GLUTAMATE RECEPTOR"/>
    <property type="match status" value="1"/>
</dbReference>
<dbReference type="Pfam" id="PF01094">
    <property type="entry name" value="ANF_receptor"/>
    <property type="match status" value="1"/>
</dbReference>
<dbReference type="Pfam" id="PF00060">
    <property type="entry name" value="Lig_chan"/>
    <property type="match status" value="1"/>
</dbReference>
<dbReference type="Pfam" id="PF10613">
    <property type="entry name" value="Lig_chan-Glu_bd"/>
    <property type="match status" value="1"/>
</dbReference>
<dbReference type="PRINTS" id="PR00177">
    <property type="entry name" value="NMDARECEPTOR"/>
</dbReference>
<dbReference type="SMART" id="SM00918">
    <property type="entry name" value="Lig_chan-Glu_bd"/>
    <property type="match status" value="1"/>
</dbReference>
<dbReference type="SMART" id="SM00079">
    <property type="entry name" value="PBPe"/>
    <property type="match status" value="1"/>
</dbReference>
<dbReference type="SUPFAM" id="SSF53822">
    <property type="entry name" value="Periplasmic binding protein-like I"/>
    <property type="match status" value="1"/>
</dbReference>
<dbReference type="SUPFAM" id="SSF53850">
    <property type="entry name" value="Periplasmic binding protein-like II"/>
    <property type="match status" value="1"/>
</dbReference>